<proteinExistence type="inferred from homology"/>
<organism>
    <name type="scientific">Mycolicibacterium vanbaalenii (strain DSM 7251 / JCM 13017 / BCRC 16820 / KCTC 9966 / NRRL B-24157 / PYR-1)</name>
    <name type="common">Mycobacterium vanbaalenii</name>
    <dbReference type="NCBI Taxonomy" id="350058"/>
    <lineage>
        <taxon>Bacteria</taxon>
        <taxon>Bacillati</taxon>
        <taxon>Actinomycetota</taxon>
        <taxon>Actinomycetes</taxon>
        <taxon>Mycobacteriales</taxon>
        <taxon>Mycobacteriaceae</taxon>
        <taxon>Mycolicibacterium</taxon>
    </lineage>
</organism>
<protein>
    <recommendedName>
        <fullName evidence="1">Flavin-dependent thymidylate synthase</fullName>
        <shortName evidence="1">FDTS</shortName>
        <ecNumber evidence="1">2.1.1.148</ecNumber>
    </recommendedName>
    <alternativeName>
        <fullName evidence="1">FAD-dependent thymidylate synthase</fullName>
    </alternativeName>
    <alternativeName>
        <fullName evidence="1">Thymidylate synthase ThyX</fullName>
        <shortName evidence="1">TS</shortName>
        <shortName evidence="1">TSase</shortName>
    </alternativeName>
</protein>
<reference key="1">
    <citation type="submission" date="2006-12" db="EMBL/GenBank/DDBJ databases">
        <title>Complete sequence of Mycobacterium vanbaalenii PYR-1.</title>
        <authorList>
            <consortium name="US DOE Joint Genome Institute"/>
            <person name="Copeland A."/>
            <person name="Lucas S."/>
            <person name="Lapidus A."/>
            <person name="Barry K."/>
            <person name="Detter J.C."/>
            <person name="Glavina del Rio T."/>
            <person name="Hammon N."/>
            <person name="Israni S."/>
            <person name="Dalin E."/>
            <person name="Tice H."/>
            <person name="Pitluck S."/>
            <person name="Singan V."/>
            <person name="Schmutz J."/>
            <person name="Larimer F."/>
            <person name="Land M."/>
            <person name="Hauser L."/>
            <person name="Kyrpides N."/>
            <person name="Anderson I.J."/>
            <person name="Miller C."/>
            <person name="Richardson P."/>
        </authorList>
    </citation>
    <scope>NUCLEOTIDE SEQUENCE [LARGE SCALE GENOMIC DNA]</scope>
    <source>
        <strain>DSM 7251 / JCM 13017 / BCRC 16820 / KCTC 9966 / NRRL B-24157 / PYR-1</strain>
    </source>
</reference>
<accession>A1T7Q0</accession>
<keyword id="KW-0274">FAD</keyword>
<keyword id="KW-0285">Flavoprotein</keyword>
<keyword id="KW-0489">Methyltransferase</keyword>
<keyword id="KW-0521">NADP</keyword>
<keyword id="KW-0545">Nucleotide biosynthesis</keyword>
<keyword id="KW-0808">Transferase</keyword>
<sequence length="250" mass="27730">MAEIAPLRVQLIAKTEFSAPPDVPWSTDADGGAALVEFAGRACYQSWDKPNPRTATNAGYVRHIIDVGHFSVLEHASVSFYITGISRSCTHELIRHRHFSYSQLSQRYVPEHDSQVVAPPGIEDDPELLEIFTEAADAGRAAYTELLTRLEARLADQPNATLRRKQARQAARAVLPNATETRIVVTGNYRAWRHFIAMRASEHADLEIRRLAIECLRQLVDAAPQVFSDFEIVVLADGTEVATSPLATEV</sequence>
<evidence type="ECO:0000255" key="1">
    <source>
        <dbReference type="HAMAP-Rule" id="MF_01408"/>
    </source>
</evidence>
<evidence type="ECO:0000255" key="2">
    <source>
        <dbReference type="PROSITE-ProRule" id="PRU00661"/>
    </source>
</evidence>
<dbReference type="EC" id="2.1.1.148" evidence="1"/>
<dbReference type="EMBL" id="CP000511">
    <property type="protein sequence ID" value="ABM13200.1"/>
    <property type="molecule type" value="Genomic_DNA"/>
</dbReference>
<dbReference type="RefSeq" id="WP_011779612.1">
    <property type="nucleotide sequence ID" value="NZ_JACKSD010000054.1"/>
</dbReference>
<dbReference type="SMR" id="A1T7Q0"/>
<dbReference type="STRING" id="350058.Mvan_2386"/>
<dbReference type="KEGG" id="mva:Mvan_2386"/>
<dbReference type="eggNOG" id="COG1351">
    <property type="taxonomic scope" value="Bacteria"/>
</dbReference>
<dbReference type="HOGENOM" id="CLU_077585_1_0_11"/>
<dbReference type="UniPathway" id="UPA00575"/>
<dbReference type="Proteomes" id="UP000009159">
    <property type="component" value="Chromosome"/>
</dbReference>
<dbReference type="GO" id="GO:0050660">
    <property type="term" value="F:flavin adenine dinucleotide binding"/>
    <property type="evidence" value="ECO:0007669"/>
    <property type="project" value="InterPro"/>
</dbReference>
<dbReference type="GO" id="GO:0070402">
    <property type="term" value="F:NADPH binding"/>
    <property type="evidence" value="ECO:0007669"/>
    <property type="project" value="TreeGrafter"/>
</dbReference>
<dbReference type="GO" id="GO:0050797">
    <property type="term" value="F:thymidylate synthase (FAD) activity"/>
    <property type="evidence" value="ECO:0007669"/>
    <property type="project" value="UniProtKB-UniRule"/>
</dbReference>
<dbReference type="GO" id="GO:0004799">
    <property type="term" value="F:thymidylate synthase activity"/>
    <property type="evidence" value="ECO:0007669"/>
    <property type="project" value="TreeGrafter"/>
</dbReference>
<dbReference type="GO" id="GO:0006231">
    <property type="term" value="P:dTMP biosynthetic process"/>
    <property type="evidence" value="ECO:0007669"/>
    <property type="project" value="UniProtKB-UniRule"/>
</dbReference>
<dbReference type="GO" id="GO:0006235">
    <property type="term" value="P:dTTP biosynthetic process"/>
    <property type="evidence" value="ECO:0007669"/>
    <property type="project" value="UniProtKB-UniRule"/>
</dbReference>
<dbReference type="GO" id="GO:0032259">
    <property type="term" value="P:methylation"/>
    <property type="evidence" value="ECO:0007669"/>
    <property type="project" value="UniProtKB-KW"/>
</dbReference>
<dbReference type="CDD" id="cd20175">
    <property type="entry name" value="ThyX"/>
    <property type="match status" value="1"/>
</dbReference>
<dbReference type="Gene3D" id="3.30.1360.170">
    <property type="match status" value="1"/>
</dbReference>
<dbReference type="Gene3D" id="3.30.70.3180">
    <property type="match status" value="1"/>
</dbReference>
<dbReference type="Gene3D" id="6.10.140.450">
    <property type="match status" value="1"/>
</dbReference>
<dbReference type="HAMAP" id="MF_01408">
    <property type="entry name" value="ThyX"/>
    <property type="match status" value="1"/>
</dbReference>
<dbReference type="InterPro" id="IPR003669">
    <property type="entry name" value="Thymidylate_synthase_ThyX"/>
</dbReference>
<dbReference type="InterPro" id="IPR036098">
    <property type="entry name" value="Thymidylate_synthase_ThyX_sf"/>
</dbReference>
<dbReference type="NCBIfam" id="TIGR02170">
    <property type="entry name" value="thyX"/>
    <property type="match status" value="1"/>
</dbReference>
<dbReference type="PANTHER" id="PTHR34934">
    <property type="entry name" value="FLAVIN-DEPENDENT THYMIDYLATE SYNTHASE"/>
    <property type="match status" value="1"/>
</dbReference>
<dbReference type="PANTHER" id="PTHR34934:SF1">
    <property type="entry name" value="FLAVIN-DEPENDENT THYMIDYLATE SYNTHASE"/>
    <property type="match status" value="1"/>
</dbReference>
<dbReference type="Pfam" id="PF02511">
    <property type="entry name" value="Thy1"/>
    <property type="match status" value="1"/>
</dbReference>
<dbReference type="SUPFAM" id="SSF69796">
    <property type="entry name" value="Thymidylate synthase-complementing protein Thy1"/>
    <property type="match status" value="1"/>
</dbReference>
<dbReference type="PROSITE" id="PS51331">
    <property type="entry name" value="THYX"/>
    <property type="match status" value="1"/>
</dbReference>
<gene>
    <name evidence="1" type="primary">thyX</name>
    <name type="ordered locus">Mvan_2386</name>
</gene>
<name>THYX_MYCVP</name>
<feature type="chain" id="PRO_1000184600" description="Flavin-dependent thymidylate synthase">
    <location>
        <begin position="1"/>
        <end position="250"/>
    </location>
</feature>
<feature type="domain" description="ThyX" evidence="2">
    <location>
        <begin position="7"/>
        <end position="233"/>
    </location>
</feature>
<feature type="short sequence motif" description="ThyX motif" evidence="1">
    <location>
        <begin position="95"/>
        <end position="105"/>
    </location>
</feature>
<feature type="active site" description="Involved in ionization of N3 of dUMP, leading to its activation" evidence="1">
    <location>
        <position position="199"/>
    </location>
</feature>
<feature type="binding site" evidence="1">
    <location>
        <position position="71"/>
    </location>
    <ligand>
        <name>FAD</name>
        <dbReference type="ChEBI" id="CHEBI:57692"/>
        <note>ligand shared between neighboring subunits</note>
    </ligand>
</feature>
<feature type="binding site" evidence="1">
    <location>
        <begin position="92"/>
        <end position="95"/>
    </location>
    <ligand>
        <name>dUMP</name>
        <dbReference type="ChEBI" id="CHEBI:246422"/>
        <note>ligand shared between dimeric partners</note>
    </ligand>
</feature>
<feature type="binding site" evidence="1">
    <location>
        <begin position="95"/>
        <end position="97"/>
    </location>
    <ligand>
        <name>FAD</name>
        <dbReference type="ChEBI" id="CHEBI:57692"/>
        <note>ligand shared between neighboring subunits</note>
    </ligand>
</feature>
<feature type="binding site" description="in other chain" evidence="1">
    <location>
        <begin position="103"/>
        <end position="107"/>
    </location>
    <ligand>
        <name>dUMP</name>
        <dbReference type="ChEBI" id="CHEBI:246422"/>
        <note>ligand shared between dimeric partners</note>
    </ligand>
</feature>
<feature type="binding site" evidence="1">
    <location>
        <position position="103"/>
    </location>
    <ligand>
        <name>FAD</name>
        <dbReference type="ChEBI" id="CHEBI:57692"/>
        <note>ligand shared between neighboring subunits</note>
    </ligand>
</feature>
<feature type="binding site" description="in other chain" evidence="1">
    <location>
        <position position="172"/>
    </location>
    <ligand>
        <name>dUMP</name>
        <dbReference type="ChEBI" id="CHEBI:246422"/>
        <note>ligand shared between dimeric partners</note>
    </ligand>
</feature>
<feature type="binding site" evidence="1">
    <location>
        <begin position="188"/>
        <end position="190"/>
    </location>
    <ligand>
        <name>FAD</name>
        <dbReference type="ChEBI" id="CHEBI:57692"/>
        <note>ligand shared between neighboring subunits</note>
    </ligand>
</feature>
<feature type="binding site" evidence="1">
    <location>
        <position position="194"/>
    </location>
    <ligand>
        <name>FAD</name>
        <dbReference type="ChEBI" id="CHEBI:57692"/>
        <note>ligand shared between neighboring subunits</note>
    </ligand>
</feature>
<feature type="binding site" evidence="1">
    <location>
        <position position="199"/>
    </location>
    <ligand>
        <name>dUMP</name>
        <dbReference type="ChEBI" id="CHEBI:246422"/>
        <note>ligand shared between dimeric partners</note>
    </ligand>
</feature>
<comment type="function">
    <text evidence="1">Catalyzes the reductive methylation of 2'-deoxyuridine-5'-monophosphate (dUMP) to 2'-deoxythymidine-5'-monophosphate (dTMP) while utilizing 5,10-methylenetetrahydrofolate (mTHF) as the methyl donor, and NADPH and FADH(2) as the reductant.</text>
</comment>
<comment type="catalytic activity">
    <reaction evidence="1">
        <text>dUMP + (6R)-5,10-methylene-5,6,7,8-tetrahydrofolate + NADPH + H(+) = dTMP + (6S)-5,6,7,8-tetrahydrofolate + NADP(+)</text>
        <dbReference type="Rhea" id="RHEA:29043"/>
        <dbReference type="ChEBI" id="CHEBI:15378"/>
        <dbReference type="ChEBI" id="CHEBI:15636"/>
        <dbReference type="ChEBI" id="CHEBI:57453"/>
        <dbReference type="ChEBI" id="CHEBI:57783"/>
        <dbReference type="ChEBI" id="CHEBI:58349"/>
        <dbReference type="ChEBI" id="CHEBI:63528"/>
        <dbReference type="ChEBI" id="CHEBI:246422"/>
        <dbReference type="EC" id="2.1.1.148"/>
    </reaction>
</comment>
<comment type="cofactor">
    <cofactor evidence="1">
        <name>FAD</name>
        <dbReference type="ChEBI" id="CHEBI:57692"/>
    </cofactor>
    <text evidence="1">Binds 4 FAD per tetramer. Each FAD binding site is formed by three monomers.</text>
</comment>
<comment type="pathway">
    <text evidence="1">Pyrimidine metabolism; dTTP biosynthesis.</text>
</comment>
<comment type="subunit">
    <text evidence="1">Homotetramer.</text>
</comment>
<comment type="similarity">
    <text evidence="1">Belongs to the thymidylate synthase ThyX family.</text>
</comment>